<evidence type="ECO:0000250" key="1"/>
<evidence type="ECO:0000256" key="2">
    <source>
        <dbReference type="SAM" id="MobiDB-lite"/>
    </source>
</evidence>
<evidence type="ECO:0000269" key="3">
    <source>
    </source>
</evidence>
<evidence type="ECO:0000269" key="4">
    <source>
    </source>
</evidence>
<evidence type="ECO:0000269" key="5">
    <source>
    </source>
</evidence>
<evidence type="ECO:0000305" key="6"/>
<evidence type="ECO:0007744" key="7">
    <source>
    </source>
</evidence>
<evidence type="ECO:0007744" key="8">
    <source>
    </source>
</evidence>
<evidence type="ECO:0007744" key="9">
    <source>
    </source>
</evidence>
<evidence type="ECO:0007829" key="10">
    <source>
        <dbReference type="PDB" id="8OKD"/>
    </source>
</evidence>
<evidence type="ECO:0007829" key="11">
    <source>
        <dbReference type="PDB" id="9ENB"/>
    </source>
</evidence>
<evidence type="ECO:0007829" key="12">
    <source>
        <dbReference type="PDB" id="9ENC"/>
    </source>
</evidence>
<evidence type="ECO:0007829" key="13">
    <source>
        <dbReference type="PDB" id="9ENE"/>
    </source>
</evidence>
<proteinExistence type="evidence at protein level"/>
<organism>
    <name type="scientific">Homo sapiens</name>
    <name type="common">Human</name>
    <dbReference type="NCBI Taxonomy" id="9606"/>
    <lineage>
        <taxon>Eukaryota</taxon>
        <taxon>Metazoa</taxon>
        <taxon>Chordata</taxon>
        <taxon>Craniata</taxon>
        <taxon>Vertebrata</taxon>
        <taxon>Euteleostomi</taxon>
        <taxon>Mammalia</taxon>
        <taxon>Eutheria</taxon>
        <taxon>Euarchontoglires</taxon>
        <taxon>Primates</taxon>
        <taxon>Haplorrhini</taxon>
        <taxon>Catarrhini</taxon>
        <taxon>Hominidae</taxon>
        <taxon>Homo</taxon>
    </lineage>
</organism>
<accession>Q9BZE2</accession>
<accession>B2RAM0</accession>
<accession>Q96D17</accession>
<accession>Q96J23</accession>
<accession>Q96NB4</accession>
<gene>
    <name type="primary">PUS3</name>
    <name type="ORF">FKSG32</name>
</gene>
<dbReference type="EC" id="5.4.99.45" evidence="5"/>
<dbReference type="EMBL" id="AF325689">
    <property type="protein sequence ID" value="AAG50280.1"/>
    <property type="molecule type" value="mRNA"/>
</dbReference>
<dbReference type="EMBL" id="AK055702">
    <property type="protein sequence ID" value="BAB70990.1"/>
    <property type="molecule type" value="mRNA"/>
</dbReference>
<dbReference type="EMBL" id="AK314251">
    <property type="protein sequence ID" value="BAG36917.1"/>
    <property type="molecule type" value="mRNA"/>
</dbReference>
<dbReference type="EMBL" id="BC004822">
    <property type="protein sequence ID" value="AAH04822.1"/>
    <property type="molecule type" value="mRNA"/>
</dbReference>
<dbReference type="EMBL" id="BC013427">
    <property type="protein sequence ID" value="AAH13427.2"/>
    <property type="molecule type" value="mRNA"/>
</dbReference>
<dbReference type="CCDS" id="CCDS8466.1"/>
<dbReference type="RefSeq" id="NP_001258914.1">
    <property type="nucleotide sequence ID" value="NM_001271985.1"/>
</dbReference>
<dbReference type="RefSeq" id="NP_112597.3">
    <property type="nucleotide sequence ID" value="NM_031307.3"/>
</dbReference>
<dbReference type="PDB" id="8OKD">
    <property type="method" value="EM"/>
    <property type="resolution" value="3.10 A"/>
    <property type="chains" value="A/B=4-481"/>
</dbReference>
<dbReference type="PDB" id="9ENB">
    <property type="method" value="EM"/>
    <property type="resolution" value="2.66 A"/>
    <property type="chains" value="A/B=1-481"/>
</dbReference>
<dbReference type="PDB" id="9ENC">
    <property type="method" value="EM"/>
    <property type="resolution" value="3.36 A"/>
    <property type="chains" value="A/B=1-481"/>
</dbReference>
<dbReference type="PDB" id="9ENE">
    <property type="method" value="EM"/>
    <property type="resolution" value="3.15 A"/>
    <property type="chains" value="A/B=1-481"/>
</dbReference>
<dbReference type="PDB" id="9ENF">
    <property type="method" value="EM"/>
    <property type="resolution" value="2.97 A"/>
    <property type="chains" value="A/B=1-481"/>
</dbReference>
<dbReference type="PDB" id="9F9Q">
    <property type="method" value="EM"/>
    <property type="resolution" value="6.50 A"/>
    <property type="chains" value="A/B=4-481"/>
</dbReference>
<dbReference type="PDBsum" id="8OKD"/>
<dbReference type="PDBsum" id="9ENB"/>
<dbReference type="PDBsum" id="9ENC"/>
<dbReference type="PDBsum" id="9ENE"/>
<dbReference type="PDBsum" id="9ENF"/>
<dbReference type="PDBsum" id="9F9Q"/>
<dbReference type="EMDB" id="EMD-16917"/>
<dbReference type="EMDB" id="EMD-16926"/>
<dbReference type="EMDB" id="EMD-19830"/>
<dbReference type="EMDB" id="EMD-19831"/>
<dbReference type="EMDB" id="EMD-19832"/>
<dbReference type="EMDB" id="EMD-19833"/>
<dbReference type="EMDB" id="EMD-19834"/>
<dbReference type="EMDB" id="EMD-19835"/>
<dbReference type="EMDB" id="EMD-19836"/>
<dbReference type="SMR" id="Q9BZE2"/>
<dbReference type="BioGRID" id="123665">
    <property type="interactions" value="8"/>
</dbReference>
<dbReference type="FunCoup" id="Q9BZE2">
    <property type="interactions" value="2782"/>
</dbReference>
<dbReference type="IntAct" id="Q9BZE2">
    <property type="interactions" value="5"/>
</dbReference>
<dbReference type="STRING" id="9606.ENSP00000227474"/>
<dbReference type="GlyGen" id="Q9BZE2">
    <property type="glycosylation" value="2 sites, 1 N-linked glycan (1 site), 1 O-linked glycan (1 site)"/>
</dbReference>
<dbReference type="iPTMnet" id="Q9BZE2"/>
<dbReference type="PhosphoSitePlus" id="Q9BZE2"/>
<dbReference type="BioMuta" id="PUS3"/>
<dbReference type="DMDM" id="126302589"/>
<dbReference type="jPOST" id="Q9BZE2"/>
<dbReference type="MassIVE" id="Q9BZE2"/>
<dbReference type="PaxDb" id="9606-ENSP00000227474"/>
<dbReference type="PeptideAtlas" id="Q9BZE2"/>
<dbReference type="ProteomicsDB" id="79820"/>
<dbReference type="Pumba" id="Q9BZE2"/>
<dbReference type="Antibodypedia" id="46038">
    <property type="antibodies" value="90 antibodies from 22 providers"/>
</dbReference>
<dbReference type="DNASU" id="83480"/>
<dbReference type="Ensembl" id="ENST00000227474.8">
    <property type="protein sequence ID" value="ENSP00000227474.3"/>
    <property type="gene ID" value="ENSG00000110060.9"/>
</dbReference>
<dbReference type="Ensembl" id="ENST00000530811.5">
    <property type="protein sequence ID" value="ENSP00000432386.1"/>
    <property type="gene ID" value="ENSG00000110060.9"/>
</dbReference>
<dbReference type="GeneID" id="83480"/>
<dbReference type="KEGG" id="hsa:83480"/>
<dbReference type="MANE-Select" id="ENST00000227474.8">
    <property type="protein sequence ID" value="ENSP00000227474.3"/>
    <property type="RefSeq nucleotide sequence ID" value="NM_031307.4"/>
    <property type="RefSeq protein sequence ID" value="NP_112597.4"/>
</dbReference>
<dbReference type="UCSC" id="uc001qcy.3">
    <property type="organism name" value="human"/>
</dbReference>
<dbReference type="AGR" id="HGNC:25461"/>
<dbReference type="CTD" id="83480"/>
<dbReference type="DisGeNET" id="83480"/>
<dbReference type="GeneCards" id="PUS3"/>
<dbReference type="HGNC" id="HGNC:25461">
    <property type="gene designation" value="PUS3"/>
</dbReference>
<dbReference type="HPA" id="ENSG00000110060">
    <property type="expression patterns" value="Low tissue specificity"/>
</dbReference>
<dbReference type="MalaCards" id="PUS3"/>
<dbReference type="MIM" id="616283">
    <property type="type" value="gene"/>
</dbReference>
<dbReference type="MIM" id="617051">
    <property type="type" value="phenotype"/>
</dbReference>
<dbReference type="neXtProt" id="NX_Q9BZE2"/>
<dbReference type="OpenTargets" id="ENSG00000110060"/>
<dbReference type="Orphanet" id="488627">
    <property type="disease" value="Severe growth deficiency-strabismus-extensive dermal melanocytosis-intellectual disability syndrome"/>
</dbReference>
<dbReference type="PharmGKB" id="PA134874048"/>
<dbReference type="VEuPathDB" id="HostDB:ENSG00000110060"/>
<dbReference type="eggNOG" id="KOG2554">
    <property type="taxonomic scope" value="Eukaryota"/>
</dbReference>
<dbReference type="GeneTree" id="ENSGT00950000183160"/>
<dbReference type="HOGENOM" id="CLU_014673_2_0_1"/>
<dbReference type="InParanoid" id="Q9BZE2"/>
<dbReference type="OMA" id="YFGWEYN"/>
<dbReference type="OrthoDB" id="25767at2759"/>
<dbReference type="PAN-GO" id="Q9BZE2">
    <property type="GO annotations" value="5 GO annotations based on evolutionary models"/>
</dbReference>
<dbReference type="PhylomeDB" id="Q9BZE2"/>
<dbReference type="TreeFam" id="TF314428"/>
<dbReference type="PathwayCommons" id="Q9BZE2"/>
<dbReference type="Reactome" id="R-HSA-6782315">
    <property type="pathway name" value="tRNA modification in the nucleus and cytosol"/>
</dbReference>
<dbReference type="SignaLink" id="Q9BZE2"/>
<dbReference type="BioGRID-ORCS" id="83480">
    <property type="hits" value="31 hits in 1172 CRISPR screens"/>
</dbReference>
<dbReference type="GenomeRNAi" id="83480"/>
<dbReference type="Pharos" id="Q9BZE2">
    <property type="development level" value="Tbio"/>
</dbReference>
<dbReference type="PRO" id="PR:Q9BZE2"/>
<dbReference type="Proteomes" id="UP000005640">
    <property type="component" value="Chromosome 11"/>
</dbReference>
<dbReference type="RNAct" id="Q9BZE2">
    <property type="molecule type" value="protein"/>
</dbReference>
<dbReference type="Bgee" id="ENSG00000110060">
    <property type="expression patterns" value="Expressed in buccal mucosa cell and 208 other cell types or tissues"/>
</dbReference>
<dbReference type="ExpressionAtlas" id="Q9BZE2">
    <property type="expression patterns" value="baseline and differential"/>
</dbReference>
<dbReference type="GO" id="GO:0005737">
    <property type="term" value="C:cytoplasm"/>
    <property type="evidence" value="ECO:0000318"/>
    <property type="project" value="GO_Central"/>
</dbReference>
<dbReference type="GO" id="GO:0005829">
    <property type="term" value="C:cytosol"/>
    <property type="evidence" value="ECO:0000304"/>
    <property type="project" value="Reactome"/>
</dbReference>
<dbReference type="GO" id="GO:0005634">
    <property type="term" value="C:nucleus"/>
    <property type="evidence" value="ECO:0000318"/>
    <property type="project" value="GO_Central"/>
</dbReference>
<dbReference type="GO" id="GO:0009982">
    <property type="term" value="F:pseudouridine synthase activity"/>
    <property type="evidence" value="ECO:0000269"/>
    <property type="project" value="Reactome"/>
</dbReference>
<dbReference type="GO" id="GO:0003723">
    <property type="term" value="F:RNA binding"/>
    <property type="evidence" value="ECO:0007669"/>
    <property type="project" value="InterPro"/>
</dbReference>
<dbReference type="GO" id="GO:0160154">
    <property type="term" value="F:tRNA pseudouridine(38/39) synthase activity"/>
    <property type="evidence" value="ECO:0000315"/>
    <property type="project" value="UniProtKB"/>
</dbReference>
<dbReference type="GO" id="GO:1990481">
    <property type="term" value="P:mRNA pseudouridine synthesis"/>
    <property type="evidence" value="ECO:0000318"/>
    <property type="project" value="GO_Central"/>
</dbReference>
<dbReference type="GO" id="GO:0006400">
    <property type="term" value="P:tRNA modification"/>
    <property type="evidence" value="ECO:0000304"/>
    <property type="project" value="Reactome"/>
</dbReference>
<dbReference type="GO" id="GO:0031119">
    <property type="term" value="P:tRNA pseudouridine synthesis"/>
    <property type="evidence" value="ECO:0000315"/>
    <property type="project" value="UniProtKB"/>
</dbReference>
<dbReference type="CDD" id="cd02569">
    <property type="entry name" value="PseudoU_synth_ScPus3"/>
    <property type="match status" value="1"/>
</dbReference>
<dbReference type="FunFam" id="3.30.70.580:FF:000007">
    <property type="entry name" value="tRNA pseudouridine synthase"/>
    <property type="match status" value="1"/>
</dbReference>
<dbReference type="FunFam" id="3.30.70.660:FF:000005">
    <property type="entry name" value="tRNA pseudouridine synthase"/>
    <property type="match status" value="1"/>
</dbReference>
<dbReference type="Gene3D" id="3.30.70.660">
    <property type="entry name" value="Pseudouridine synthase I, catalytic domain, C-terminal subdomain"/>
    <property type="match status" value="1"/>
</dbReference>
<dbReference type="Gene3D" id="3.30.70.580">
    <property type="entry name" value="Pseudouridine synthase I, catalytic domain, N-terminal subdomain"/>
    <property type="match status" value="1"/>
</dbReference>
<dbReference type="HAMAP" id="MF_00171">
    <property type="entry name" value="TruA"/>
    <property type="match status" value="1"/>
</dbReference>
<dbReference type="InterPro" id="IPR020103">
    <property type="entry name" value="PsdUridine_synth_cat_dom_sf"/>
</dbReference>
<dbReference type="InterPro" id="IPR001406">
    <property type="entry name" value="PsdUridine_synth_TruA"/>
</dbReference>
<dbReference type="InterPro" id="IPR020097">
    <property type="entry name" value="PsdUridine_synth_TruA_a/b_dom"/>
</dbReference>
<dbReference type="InterPro" id="IPR020095">
    <property type="entry name" value="PsdUridine_synth_TruA_C"/>
</dbReference>
<dbReference type="InterPro" id="IPR041707">
    <property type="entry name" value="Pus3-like"/>
</dbReference>
<dbReference type="InterPro" id="IPR020094">
    <property type="entry name" value="TruA/RsuA/RluB/E/F_N"/>
</dbReference>
<dbReference type="NCBIfam" id="TIGR00071">
    <property type="entry name" value="hisT_truA"/>
    <property type="match status" value="1"/>
</dbReference>
<dbReference type="PANTHER" id="PTHR11142">
    <property type="entry name" value="PSEUDOURIDYLATE SYNTHASE"/>
    <property type="match status" value="1"/>
</dbReference>
<dbReference type="PANTHER" id="PTHR11142:SF5">
    <property type="entry name" value="TRNA PSEUDOURIDINE(38_39) SYNTHASE"/>
    <property type="match status" value="1"/>
</dbReference>
<dbReference type="Pfam" id="PF01416">
    <property type="entry name" value="PseudoU_synth_1"/>
    <property type="match status" value="1"/>
</dbReference>
<dbReference type="SUPFAM" id="SSF55120">
    <property type="entry name" value="Pseudouridine synthase"/>
    <property type="match status" value="1"/>
</dbReference>
<keyword id="KW-0002">3D-structure</keyword>
<keyword id="KW-0007">Acetylation</keyword>
<keyword id="KW-0991">Intellectual disability</keyword>
<keyword id="KW-0413">Isomerase</keyword>
<keyword id="KW-0539">Nucleus</keyword>
<keyword id="KW-0597">Phosphoprotein</keyword>
<keyword id="KW-1267">Proteomics identification</keyword>
<keyword id="KW-1185">Reference proteome</keyword>
<keyword id="KW-0819">tRNA processing</keyword>
<reference key="1">
    <citation type="submission" date="2000-12" db="EMBL/GenBank/DDBJ databases">
        <title>Identification and characterization of FKSG32, a novel gene expressed in lung carcinoid.</title>
        <authorList>
            <person name="Wang Y.-G."/>
            <person name="Gong L."/>
        </authorList>
    </citation>
    <scope>NUCLEOTIDE SEQUENCE [MRNA]</scope>
</reference>
<reference key="2">
    <citation type="journal article" date="2004" name="Nat. Genet.">
        <title>Complete sequencing and characterization of 21,243 full-length human cDNAs.</title>
        <authorList>
            <person name="Ota T."/>
            <person name="Suzuki Y."/>
            <person name="Nishikawa T."/>
            <person name="Otsuki T."/>
            <person name="Sugiyama T."/>
            <person name="Irie R."/>
            <person name="Wakamatsu A."/>
            <person name="Hayashi K."/>
            <person name="Sato H."/>
            <person name="Nagai K."/>
            <person name="Kimura K."/>
            <person name="Makita H."/>
            <person name="Sekine M."/>
            <person name="Obayashi M."/>
            <person name="Nishi T."/>
            <person name="Shibahara T."/>
            <person name="Tanaka T."/>
            <person name="Ishii S."/>
            <person name="Yamamoto J."/>
            <person name="Saito K."/>
            <person name="Kawai Y."/>
            <person name="Isono Y."/>
            <person name="Nakamura Y."/>
            <person name="Nagahari K."/>
            <person name="Murakami K."/>
            <person name="Yasuda T."/>
            <person name="Iwayanagi T."/>
            <person name="Wagatsuma M."/>
            <person name="Shiratori A."/>
            <person name="Sudo H."/>
            <person name="Hosoiri T."/>
            <person name="Kaku Y."/>
            <person name="Kodaira H."/>
            <person name="Kondo H."/>
            <person name="Sugawara M."/>
            <person name="Takahashi M."/>
            <person name="Kanda K."/>
            <person name="Yokoi T."/>
            <person name="Furuya T."/>
            <person name="Kikkawa E."/>
            <person name="Omura Y."/>
            <person name="Abe K."/>
            <person name="Kamihara K."/>
            <person name="Katsuta N."/>
            <person name="Sato K."/>
            <person name="Tanikawa M."/>
            <person name="Yamazaki M."/>
            <person name="Ninomiya K."/>
            <person name="Ishibashi T."/>
            <person name="Yamashita H."/>
            <person name="Murakawa K."/>
            <person name="Fujimori K."/>
            <person name="Tanai H."/>
            <person name="Kimata M."/>
            <person name="Watanabe M."/>
            <person name="Hiraoka S."/>
            <person name="Chiba Y."/>
            <person name="Ishida S."/>
            <person name="Ono Y."/>
            <person name="Takiguchi S."/>
            <person name="Watanabe S."/>
            <person name="Yosida M."/>
            <person name="Hotuta T."/>
            <person name="Kusano J."/>
            <person name="Kanehori K."/>
            <person name="Takahashi-Fujii A."/>
            <person name="Hara H."/>
            <person name="Tanase T.-O."/>
            <person name="Nomura Y."/>
            <person name="Togiya S."/>
            <person name="Komai F."/>
            <person name="Hara R."/>
            <person name="Takeuchi K."/>
            <person name="Arita M."/>
            <person name="Imose N."/>
            <person name="Musashino K."/>
            <person name="Yuuki H."/>
            <person name="Oshima A."/>
            <person name="Sasaki N."/>
            <person name="Aotsuka S."/>
            <person name="Yoshikawa Y."/>
            <person name="Matsunawa H."/>
            <person name="Ichihara T."/>
            <person name="Shiohata N."/>
            <person name="Sano S."/>
            <person name="Moriya S."/>
            <person name="Momiyama H."/>
            <person name="Satoh N."/>
            <person name="Takami S."/>
            <person name="Terashima Y."/>
            <person name="Suzuki O."/>
            <person name="Nakagawa S."/>
            <person name="Senoh A."/>
            <person name="Mizoguchi H."/>
            <person name="Goto Y."/>
            <person name="Shimizu F."/>
            <person name="Wakebe H."/>
            <person name="Hishigaki H."/>
            <person name="Watanabe T."/>
            <person name="Sugiyama A."/>
            <person name="Takemoto M."/>
            <person name="Kawakami B."/>
            <person name="Yamazaki M."/>
            <person name="Watanabe K."/>
            <person name="Kumagai A."/>
            <person name="Itakura S."/>
            <person name="Fukuzumi Y."/>
            <person name="Fujimori Y."/>
            <person name="Komiyama M."/>
            <person name="Tashiro H."/>
            <person name="Tanigami A."/>
            <person name="Fujiwara T."/>
            <person name="Ono T."/>
            <person name="Yamada K."/>
            <person name="Fujii Y."/>
            <person name="Ozaki K."/>
            <person name="Hirao M."/>
            <person name="Ohmori Y."/>
            <person name="Kawabata A."/>
            <person name="Hikiji T."/>
            <person name="Kobatake N."/>
            <person name="Inagaki H."/>
            <person name="Ikema Y."/>
            <person name="Okamoto S."/>
            <person name="Okitani R."/>
            <person name="Kawakami T."/>
            <person name="Noguchi S."/>
            <person name="Itoh T."/>
            <person name="Shigeta K."/>
            <person name="Senba T."/>
            <person name="Matsumura K."/>
            <person name="Nakajima Y."/>
            <person name="Mizuno T."/>
            <person name="Morinaga M."/>
            <person name="Sasaki M."/>
            <person name="Togashi T."/>
            <person name="Oyama M."/>
            <person name="Hata H."/>
            <person name="Watanabe M."/>
            <person name="Komatsu T."/>
            <person name="Mizushima-Sugano J."/>
            <person name="Satoh T."/>
            <person name="Shirai Y."/>
            <person name="Takahashi Y."/>
            <person name="Nakagawa K."/>
            <person name="Okumura K."/>
            <person name="Nagase T."/>
            <person name="Nomura N."/>
            <person name="Kikuchi H."/>
            <person name="Masuho Y."/>
            <person name="Yamashita R."/>
            <person name="Nakai K."/>
            <person name="Yada T."/>
            <person name="Nakamura Y."/>
            <person name="Ohara O."/>
            <person name="Isogai T."/>
            <person name="Sugano S."/>
        </authorList>
    </citation>
    <scope>NUCLEOTIDE SEQUENCE [LARGE SCALE MRNA]</scope>
    <scope>VARIANTS ASP-3 AND SER-46</scope>
    <source>
        <tissue>Lung</tissue>
    </source>
</reference>
<reference key="3">
    <citation type="journal article" date="2004" name="Genome Res.">
        <title>The status, quality, and expansion of the NIH full-length cDNA project: the Mammalian Gene Collection (MGC).</title>
        <authorList>
            <consortium name="The MGC Project Team"/>
        </authorList>
    </citation>
    <scope>NUCLEOTIDE SEQUENCE [LARGE SCALE MRNA]</scope>
    <scope>VARIANTS ASP-3; SER-46 AND ASP-460</scope>
    <source>
        <tissue>Pancreas</tissue>
        <tissue>Placenta</tissue>
    </source>
</reference>
<reference key="4">
    <citation type="journal article" date="2008" name="Proc. Natl. Acad. Sci. U.S.A.">
        <title>A quantitative atlas of mitotic phosphorylation.</title>
        <authorList>
            <person name="Dephoure N."/>
            <person name="Zhou C."/>
            <person name="Villen J."/>
            <person name="Beausoleil S.A."/>
            <person name="Bakalarski C.E."/>
            <person name="Elledge S.J."/>
            <person name="Gygi S.P."/>
        </authorList>
    </citation>
    <scope>PHOSPHORYLATION [LARGE SCALE ANALYSIS] AT THR-456 AND THR-468</scope>
    <scope>IDENTIFICATION BY MASS SPECTROMETRY [LARGE SCALE ANALYSIS]</scope>
    <source>
        <tissue>Cervix carcinoma</tissue>
    </source>
</reference>
<reference key="5">
    <citation type="journal article" date="2009" name="Anal. Chem.">
        <title>Lys-N and trypsin cover complementary parts of the phosphoproteome in a refined SCX-based approach.</title>
        <authorList>
            <person name="Gauci S."/>
            <person name="Helbig A.O."/>
            <person name="Slijper M."/>
            <person name="Krijgsveld J."/>
            <person name="Heck A.J."/>
            <person name="Mohammed S."/>
        </authorList>
    </citation>
    <scope>ACETYLATION [LARGE SCALE ANALYSIS] AT ALA-2</scope>
    <scope>CLEAVAGE OF INITIATOR METHIONINE [LARGE SCALE ANALYSIS]</scope>
    <scope>IDENTIFICATION BY MASS SPECTROMETRY [LARGE SCALE ANALYSIS]</scope>
</reference>
<reference key="6">
    <citation type="journal article" date="2013" name="J. Proteome Res.">
        <title>Toward a comprehensive characterization of a human cancer cell phosphoproteome.</title>
        <authorList>
            <person name="Zhou H."/>
            <person name="Di Palma S."/>
            <person name="Preisinger C."/>
            <person name="Peng M."/>
            <person name="Polat A.N."/>
            <person name="Heck A.J."/>
            <person name="Mohammed S."/>
        </authorList>
    </citation>
    <scope>PHOSPHORYLATION [LARGE SCALE ANALYSIS] AT THR-466</scope>
    <scope>IDENTIFICATION BY MASS SPECTROMETRY [LARGE SCALE ANALYSIS]</scope>
    <source>
        <tissue>Erythroleukemia</tissue>
    </source>
</reference>
<reference key="7">
    <citation type="journal article" date="2016" name="Hum. Genet.">
        <title>A homozygous truncating mutation in PUS3 expands the role of tRNA modification in normal cognition.</title>
        <authorList>
            <person name="Shaheen R."/>
            <person name="Han L."/>
            <person name="Faqeih E."/>
            <person name="Ewida N."/>
            <person name="Alobeid E."/>
            <person name="Phizicky E.M."/>
            <person name="Alkuraya F.S."/>
        </authorList>
    </citation>
    <scope>INVOLVEMENT IN NEDMIGS</scope>
    <scope>FUNCTION</scope>
    <scope>CATALYTIC ACTIVITY</scope>
</reference>
<feature type="initiator methionine" description="Removed" evidence="8">
    <location>
        <position position="1"/>
    </location>
</feature>
<feature type="chain" id="PRO_0000057520" description="tRNA pseudouridine(38/39) synthase">
    <location>
        <begin position="2"/>
        <end position="481"/>
    </location>
</feature>
<feature type="region of interest" description="Disordered" evidence="2">
    <location>
        <begin position="29"/>
        <end position="50"/>
    </location>
</feature>
<feature type="compositionally biased region" description="Basic and acidic residues" evidence="2">
    <location>
        <begin position="29"/>
        <end position="41"/>
    </location>
</feature>
<feature type="active site" description="Nucleophile" evidence="1">
    <location>
        <position position="118"/>
    </location>
</feature>
<feature type="binding site" evidence="1">
    <location>
        <position position="195"/>
    </location>
    <ligand>
        <name>substrate</name>
    </ligand>
</feature>
<feature type="modified residue" description="N-acetylalanine" evidence="8">
    <location>
        <position position="2"/>
    </location>
</feature>
<feature type="modified residue" description="Phosphothreonine" evidence="7">
    <location>
        <position position="456"/>
    </location>
</feature>
<feature type="modified residue" description="Phosphothreonine" evidence="9">
    <location>
        <position position="466"/>
    </location>
</feature>
<feature type="modified residue" description="Phosphothreonine" evidence="7">
    <location>
        <position position="468"/>
    </location>
</feature>
<feature type="sequence variant" id="VAR_030836" description="In dbSNP:rs622756." evidence="3 4">
    <original>Y</original>
    <variation>D</variation>
    <location>
        <position position="3"/>
    </location>
</feature>
<feature type="sequence variant" id="VAR_030837" description="In dbSNP:rs549990." evidence="3 4">
    <original>A</original>
    <variation>S</variation>
    <location>
        <position position="46"/>
    </location>
</feature>
<feature type="sequence variant" id="VAR_030838" description="In dbSNP:rs3088241." evidence="4">
    <original>E</original>
    <variation>D</variation>
    <location>
        <position position="460"/>
    </location>
</feature>
<feature type="sequence conflict" description="In Ref. 2; BAB70990." evidence="6" ref="2">
    <original>F</original>
    <variation>L</variation>
    <location>
        <position position="145"/>
    </location>
</feature>
<feature type="helix" evidence="11">
    <location>
        <begin position="57"/>
        <end position="59"/>
    </location>
</feature>
<feature type="strand" evidence="11">
    <location>
        <begin position="60"/>
        <end position="71"/>
    </location>
</feature>
<feature type="helix" evidence="11">
    <location>
        <begin position="73"/>
        <end position="75"/>
    </location>
</feature>
<feature type="helix" evidence="11">
    <location>
        <begin position="89"/>
        <end position="99"/>
    </location>
</feature>
<feature type="helix" evidence="11">
    <location>
        <begin position="106"/>
        <end position="108"/>
    </location>
</feature>
<feature type="strand" evidence="11">
    <location>
        <begin position="112"/>
        <end position="114"/>
    </location>
</feature>
<feature type="strand" evidence="11">
    <location>
        <begin position="122"/>
        <end position="135"/>
    </location>
</feature>
<feature type="helix" evidence="11">
    <location>
        <begin position="160"/>
        <end position="167"/>
    </location>
</feature>
<feature type="strand" evidence="11">
    <location>
        <begin position="173"/>
        <end position="179"/>
    </location>
</feature>
<feature type="turn" evidence="11">
    <location>
        <begin position="186"/>
        <end position="188"/>
    </location>
</feature>
<feature type="strand" evidence="11">
    <location>
        <begin position="192"/>
        <end position="200"/>
    </location>
</feature>
<feature type="helix" evidence="11">
    <location>
        <begin position="206"/>
        <end position="213"/>
    </location>
</feature>
<feature type="helix" evidence="10">
    <location>
        <begin position="214"/>
        <end position="216"/>
    </location>
</feature>
<feature type="strand" evidence="11">
    <location>
        <begin position="218"/>
        <end position="221"/>
    </location>
</feature>
<feature type="helix" evidence="11">
    <location>
        <begin position="223"/>
        <end position="225"/>
    </location>
</feature>
<feature type="helix" evidence="11">
    <location>
        <begin position="230"/>
        <end position="232"/>
    </location>
</feature>
<feature type="strand" evidence="11">
    <location>
        <begin position="238"/>
        <end position="250"/>
    </location>
</feature>
<feature type="turn" evidence="11">
    <location>
        <begin position="257"/>
        <end position="259"/>
    </location>
</feature>
<feature type="helix" evidence="10">
    <location>
        <begin position="260"/>
        <end position="262"/>
    </location>
</feature>
<feature type="strand" evidence="11">
    <location>
        <begin position="264"/>
        <end position="272"/>
    </location>
</feature>
<feature type="helix" evidence="11">
    <location>
        <begin position="278"/>
        <end position="290"/>
    </location>
</feature>
<feature type="strand" evidence="12">
    <location>
        <begin position="292"/>
        <end position="294"/>
    </location>
</feature>
<feature type="helix" evidence="11">
    <location>
        <begin position="298"/>
        <end position="302"/>
    </location>
</feature>
<feature type="turn" evidence="11">
    <location>
        <begin position="305"/>
        <end position="307"/>
    </location>
</feature>
<feature type="strand" evidence="11">
    <location>
        <begin position="322"/>
        <end position="328"/>
    </location>
</feature>
<feature type="helix" evidence="11">
    <location>
        <begin position="338"/>
        <end position="368"/>
    </location>
</feature>
<feature type="turn" evidence="13">
    <location>
        <begin position="398"/>
        <end position="401"/>
    </location>
</feature>
<feature type="helix" evidence="13">
    <location>
        <begin position="414"/>
        <end position="416"/>
    </location>
</feature>
<comment type="function">
    <text evidence="5">Formation of pseudouridine at position 39 in the anticodon stem and loop of transfer RNAs.</text>
</comment>
<comment type="catalytic activity">
    <reaction evidence="5">
        <text>uridine(38/39) in tRNA = pseudouridine(38/39) in tRNA</text>
        <dbReference type="Rhea" id="RHEA:42564"/>
        <dbReference type="Rhea" id="RHEA-COMP:10117"/>
        <dbReference type="Rhea" id="RHEA-COMP:10118"/>
        <dbReference type="ChEBI" id="CHEBI:65314"/>
        <dbReference type="ChEBI" id="CHEBI:65315"/>
        <dbReference type="EC" id="5.4.99.45"/>
    </reaction>
</comment>
<comment type="subcellular location">
    <subcellularLocation>
        <location evidence="6">Nucleus</location>
    </subcellularLocation>
</comment>
<comment type="disease" evidence="5">
    <disease id="DI-04776">
        <name>Neurodevelopmental disorder with microcephaly and gray sclerae</name>
        <acronym>NEDMIGS</acronym>
        <description>An autosomal recessive disorder characterized by global developmental delay, hypotonia, profoundly impaired intellectual development with poor or absent language, mild microcephaly, abnormal visual fixation, and seizures in most patients. Affected individuals also have gray sclerae.</description>
        <dbReference type="MIM" id="617051"/>
    </disease>
    <text>The disease is caused by variants affecting the gene represented in this entry.</text>
</comment>
<comment type="similarity">
    <text evidence="6">Belongs to the tRNA pseudouridine synthase TruA family.</text>
</comment>
<name>PUS3_HUMAN</name>
<protein>
    <recommendedName>
        <fullName>tRNA pseudouridine(38/39) synthase</fullName>
        <ecNumber evidence="5">5.4.99.45</ecNumber>
    </recommendedName>
    <alternativeName>
        <fullName>tRNA pseudouridine synthase 3</fullName>
    </alternativeName>
    <alternativeName>
        <fullName>tRNA pseudouridylate synthase 3</fullName>
    </alternativeName>
    <alternativeName>
        <fullName>tRNA-uridine isomerase 3</fullName>
    </alternativeName>
</protein>
<sequence>MAYNDTDRNQTEKLLKRVRELEQEVQRLKKEQAKNKEDSNIRENSAGAGKTKRAFDFSAHGRRHVALRIAYMGWGYQGFASQENTNNTIEEKLFEALTKTRLVESRQTSNYHRCGRTDKGVSAFGQVISLDLRSQFPRGRDSEDFNVKEEANAAAEEIRYTHILNRVLPPDIRILAWAPVEPSFSARFSCLERTYRYFFPRADLDIVTMDYAAQKYVGTHDFRNLCKMDVANGVINFQRTILSAQVQLVGQSPGEGRWQEPFQLCQFEVTGQAFLYHQVRCMMAILFLIGQGMEKPEIIDELLNIEKNPQKPQYSMAVEFPLVLYDCKFENVKWIYDQEAQEFNITHLQQLWANHAVKTHMLYSMLQGLDTVPVPCGIGPKMDGMTEWGNVKPSVIKQTSAFVEGVKMRTYKPLMDRPKCQGLESRIQHFVRRGRIEHPHLFHEEETKAKRDCNDTLEEENTNLETPTKRVCVDTEIKSII</sequence>